<organism>
    <name type="scientific">Nocardioides sp. (strain ATCC BAA-499 / JS614)</name>
    <dbReference type="NCBI Taxonomy" id="196162"/>
    <lineage>
        <taxon>Bacteria</taxon>
        <taxon>Bacillati</taxon>
        <taxon>Actinomycetota</taxon>
        <taxon>Actinomycetes</taxon>
        <taxon>Propionibacteriales</taxon>
        <taxon>Nocardioidaceae</taxon>
        <taxon>Nocardioides</taxon>
    </lineage>
</organism>
<proteinExistence type="inferred from homology"/>
<accession>A1SF13</accession>
<protein>
    <recommendedName>
        <fullName evidence="1">Catalase-peroxidase</fullName>
        <shortName evidence="1">CP</shortName>
        <ecNumber evidence="1">1.11.1.21</ecNumber>
    </recommendedName>
    <alternativeName>
        <fullName evidence="1">Peroxidase/catalase</fullName>
    </alternativeName>
</protein>
<keyword id="KW-0349">Heme</keyword>
<keyword id="KW-0376">Hydrogen peroxide</keyword>
<keyword id="KW-0408">Iron</keyword>
<keyword id="KW-0479">Metal-binding</keyword>
<keyword id="KW-0560">Oxidoreductase</keyword>
<keyword id="KW-0575">Peroxidase</keyword>
<keyword id="KW-1185">Reference proteome</keyword>
<name>KATG_NOCSJ</name>
<evidence type="ECO:0000255" key="1">
    <source>
        <dbReference type="HAMAP-Rule" id="MF_01961"/>
    </source>
</evidence>
<evidence type="ECO:0000256" key="2">
    <source>
        <dbReference type="SAM" id="MobiDB-lite"/>
    </source>
</evidence>
<feature type="chain" id="PRO_0000354852" description="Catalase-peroxidase">
    <location>
        <begin position="1"/>
        <end position="760"/>
    </location>
</feature>
<feature type="region of interest" description="Disordered" evidence="2">
    <location>
        <begin position="1"/>
        <end position="57"/>
    </location>
</feature>
<feature type="active site" description="Proton acceptor" evidence="1">
    <location>
        <position position="130"/>
    </location>
</feature>
<feature type="binding site" description="axial binding residue" evidence="1">
    <location>
        <position position="292"/>
    </location>
    <ligand>
        <name>heme b</name>
        <dbReference type="ChEBI" id="CHEBI:60344"/>
    </ligand>
    <ligandPart>
        <name>Fe</name>
        <dbReference type="ChEBI" id="CHEBI:18248"/>
    </ligandPart>
</feature>
<feature type="site" description="Transition state stabilizer" evidence="1">
    <location>
        <position position="126"/>
    </location>
</feature>
<feature type="cross-link" description="Tryptophyl-tyrosyl-methioninium (Trp-Tyr) (with M-277)" evidence="1">
    <location>
        <begin position="129"/>
        <end position="251"/>
    </location>
</feature>
<feature type="cross-link" description="Tryptophyl-tyrosyl-methioninium (Tyr-Met) (with W-129)" evidence="1">
    <location>
        <begin position="251"/>
        <end position="277"/>
    </location>
</feature>
<reference key="1">
    <citation type="submission" date="2006-12" db="EMBL/GenBank/DDBJ databases">
        <title>Complete sequence of chromosome 1 of Nocardioides sp. JS614.</title>
        <authorList>
            <person name="Copeland A."/>
            <person name="Lucas S."/>
            <person name="Lapidus A."/>
            <person name="Barry K."/>
            <person name="Detter J.C."/>
            <person name="Glavina del Rio T."/>
            <person name="Hammon N."/>
            <person name="Israni S."/>
            <person name="Dalin E."/>
            <person name="Tice H."/>
            <person name="Pitluck S."/>
            <person name="Thompson L.S."/>
            <person name="Brettin T."/>
            <person name="Bruce D."/>
            <person name="Han C."/>
            <person name="Tapia R."/>
            <person name="Schmutz J."/>
            <person name="Larimer F."/>
            <person name="Land M."/>
            <person name="Hauser L."/>
            <person name="Kyrpides N."/>
            <person name="Kim E."/>
            <person name="Mattes T."/>
            <person name="Gossett J."/>
            <person name="Richardson P."/>
        </authorList>
    </citation>
    <scope>NUCLEOTIDE SEQUENCE [LARGE SCALE GENOMIC DNA]</scope>
    <source>
        <strain>ATCC BAA-499 / JS614</strain>
    </source>
</reference>
<comment type="function">
    <text evidence="1">Bifunctional enzyme with both catalase and broad-spectrum peroxidase activity.</text>
</comment>
<comment type="catalytic activity">
    <reaction evidence="1">
        <text>H2O2 + AH2 = A + 2 H2O</text>
        <dbReference type="Rhea" id="RHEA:30275"/>
        <dbReference type="ChEBI" id="CHEBI:13193"/>
        <dbReference type="ChEBI" id="CHEBI:15377"/>
        <dbReference type="ChEBI" id="CHEBI:16240"/>
        <dbReference type="ChEBI" id="CHEBI:17499"/>
        <dbReference type="EC" id="1.11.1.21"/>
    </reaction>
</comment>
<comment type="catalytic activity">
    <reaction evidence="1">
        <text>2 H2O2 = O2 + 2 H2O</text>
        <dbReference type="Rhea" id="RHEA:20309"/>
        <dbReference type="ChEBI" id="CHEBI:15377"/>
        <dbReference type="ChEBI" id="CHEBI:15379"/>
        <dbReference type="ChEBI" id="CHEBI:16240"/>
        <dbReference type="EC" id="1.11.1.21"/>
    </reaction>
</comment>
<comment type="cofactor">
    <cofactor evidence="1">
        <name>heme b</name>
        <dbReference type="ChEBI" id="CHEBI:60344"/>
    </cofactor>
    <text evidence="1">Binds 1 heme b (iron(II)-protoporphyrin IX) group per dimer.</text>
</comment>
<comment type="subunit">
    <text evidence="1">Homodimer or homotetramer.</text>
</comment>
<comment type="PTM">
    <text evidence="1">Formation of the three residue Trp-Tyr-Met cross-link is important for the catalase, but not the peroxidase activity of the enzyme.</text>
</comment>
<comment type="similarity">
    <text evidence="1">Belongs to the peroxidase family. Peroxidase/catalase subfamily.</text>
</comment>
<dbReference type="EC" id="1.11.1.21" evidence="1"/>
<dbReference type="EMBL" id="CP000509">
    <property type="protein sequence ID" value="ABL80398.1"/>
    <property type="molecule type" value="Genomic_DNA"/>
</dbReference>
<dbReference type="RefSeq" id="WP_011754347.1">
    <property type="nucleotide sequence ID" value="NC_008699.1"/>
</dbReference>
<dbReference type="SMR" id="A1SF13"/>
<dbReference type="STRING" id="196162.Noca_0875"/>
<dbReference type="PeroxiBase" id="2691">
    <property type="entry name" value="NspCP01"/>
</dbReference>
<dbReference type="KEGG" id="nca:Noca_0875"/>
<dbReference type="eggNOG" id="COG0376">
    <property type="taxonomic scope" value="Bacteria"/>
</dbReference>
<dbReference type="HOGENOM" id="CLU_025424_2_0_11"/>
<dbReference type="OrthoDB" id="9759743at2"/>
<dbReference type="Proteomes" id="UP000000640">
    <property type="component" value="Chromosome"/>
</dbReference>
<dbReference type="GO" id="GO:0005829">
    <property type="term" value="C:cytosol"/>
    <property type="evidence" value="ECO:0007669"/>
    <property type="project" value="TreeGrafter"/>
</dbReference>
<dbReference type="GO" id="GO:0004096">
    <property type="term" value="F:catalase activity"/>
    <property type="evidence" value="ECO:0007669"/>
    <property type="project" value="UniProtKB-UniRule"/>
</dbReference>
<dbReference type="GO" id="GO:0020037">
    <property type="term" value="F:heme binding"/>
    <property type="evidence" value="ECO:0007669"/>
    <property type="project" value="InterPro"/>
</dbReference>
<dbReference type="GO" id="GO:0046872">
    <property type="term" value="F:metal ion binding"/>
    <property type="evidence" value="ECO:0007669"/>
    <property type="project" value="UniProtKB-KW"/>
</dbReference>
<dbReference type="GO" id="GO:0070301">
    <property type="term" value="P:cellular response to hydrogen peroxide"/>
    <property type="evidence" value="ECO:0007669"/>
    <property type="project" value="TreeGrafter"/>
</dbReference>
<dbReference type="GO" id="GO:0042744">
    <property type="term" value="P:hydrogen peroxide catabolic process"/>
    <property type="evidence" value="ECO:0007669"/>
    <property type="project" value="UniProtKB-KW"/>
</dbReference>
<dbReference type="CDD" id="cd00649">
    <property type="entry name" value="catalase_peroxidase_1"/>
    <property type="match status" value="1"/>
</dbReference>
<dbReference type="CDD" id="cd08200">
    <property type="entry name" value="catalase_peroxidase_2"/>
    <property type="match status" value="1"/>
</dbReference>
<dbReference type="FunFam" id="1.10.420.10:FF:000002">
    <property type="entry name" value="Catalase-peroxidase"/>
    <property type="match status" value="1"/>
</dbReference>
<dbReference type="FunFam" id="1.10.420.10:FF:000004">
    <property type="entry name" value="Catalase-peroxidase"/>
    <property type="match status" value="1"/>
</dbReference>
<dbReference type="FunFam" id="1.10.520.10:FF:000002">
    <property type="entry name" value="Catalase-peroxidase"/>
    <property type="match status" value="1"/>
</dbReference>
<dbReference type="Gene3D" id="1.10.520.10">
    <property type="match status" value="2"/>
</dbReference>
<dbReference type="Gene3D" id="1.10.420.10">
    <property type="entry name" value="Peroxidase, domain 2"/>
    <property type="match status" value="2"/>
</dbReference>
<dbReference type="HAMAP" id="MF_01961">
    <property type="entry name" value="Catal_peroxid"/>
    <property type="match status" value="1"/>
</dbReference>
<dbReference type="InterPro" id="IPR000763">
    <property type="entry name" value="Catalase_peroxidase"/>
</dbReference>
<dbReference type="InterPro" id="IPR002016">
    <property type="entry name" value="Haem_peroxidase"/>
</dbReference>
<dbReference type="InterPro" id="IPR010255">
    <property type="entry name" value="Haem_peroxidase_sf"/>
</dbReference>
<dbReference type="InterPro" id="IPR019794">
    <property type="entry name" value="Peroxidases_AS"/>
</dbReference>
<dbReference type="InterPro" id="IPR019793">
    <property type="entry name" value="Peroxidases_heam-ligand_BS"/>
</dbReference>
<dbReference type="NCBIfam" id="TIGR00198">
    <property type="entry name" value="cat_per_HPI"/>
    <property type="match status" value="1"/>
</dbReference>
<dbReference type="NCBIfam" id="NF011635">
    <property type="entry name" value="PRK15061.1"/>
    <property type="match status" value="1"/>
</dbReference>
<dbReference type="PANTHER" id="PTHR30555:SF0">
    <property type="entry name" value="CATALASE-PEROXIDASE"/>
    <property type="match status" value="1"/>
</dbReference>
<dbReference type="PANTHER" id="PTHR30555">
    <property type="entry name" value="HYDROPEROXIDASE I, BIFUNCTIONAL CATALASE-PEROXIDASE"/>
    <property type="match status" value="1"/>
</dbReference>
<dbReference type="Pfam" id="PF00141">
    <property type="entry name" value="peroxidase"/>
    <property type="match status" value="2"/>
</dbReference>
<dbReference type="PRINTS" id="PR00460">
    <property type="entry name" value="BPEROXIDASE"/>
</dbReference>
<dbReference type="PRINTS" id="PR00458">
    <property type="entry name" value="PEROXIDASE"/>
</dbReference>
<dbReference type="SUPFAM" id="SSF48113">
    <property type="entry name" value="Heme-dependent peroxidases"/>
    <property type="match status" value="2"/>
</dbReference>
<dbReference type="PROSITE" id="PS00435">
    <property type="entry name" value="PEROXIDASE_1"/>
    <property type="match status" value="1"/>
</dbReference>
<dbReference type="PROSITE" id="PS00436">
    <property type="entry name" value="PEROXIDASE_2"/>
    <property type="match status" value="1"/>
</dbReference>
<dbReference type="PROSITE" id="PS50873">
    <property type="entry name" value="PEROXIDASE_4"/>
    <property type="match status" value="1"/>
</dbReference>
<sequence>MTDSQDNRTPESPQGVDRKAEGGCPVLHDGVTAQGSESENPAIDSPTPRTGGRPNSLKDWWPNHLDLSVLHAHSSKSSPLDPGFRYSEEFEKLDIEALRRDIVEVLHTSQDWWPADFGHYGGLFVRMAWHAAGTYRIHDGRGGAGQGAQRFAPLNSWPDNANLDKARRLLWPVKQKHGQKISWADLIVFAGNVALEDMGFTTFGFGFGREDIWEPEEIYWGPEDTWLGDERYSGDRELSNPLGAVQMGLIYVNPEGPNGNPDPLASARDIRETFARMAMNDEETVALIAGGHTFGKTHGAGDADLVGPEPEAAPLEAQGLGWHSSFGSGKGEDTITSGIEVTWTYHPTRWDNEFFHILYAYEWELMKSAAGANQWRPKNGAGADMVPDAHDPSKRREPRMLTSDLALRFDPEYAKISSRFKDHPEEFALAFAKAWYKLLHRDLGPIARYLGPLVGETQIWQDPVPAVDHELVSDDDVAALKAKVLDSGLSVAELVSTAWASAASFRSTDKRGGANGARIRLEPQRSWAVNQPEQLAGVLDRLEGIQREFNEAGGAKISLADLIVLAGSAAVEKAAKDGGVDVTVPFRAGRTDASQEQTDVDSFAVLEPRADGFRNYLLENEKAQPEVLLVERAYLLGLTAPEMTVLVGGLRALGNNVGGSGHGVLTDRPGVLTNDFFANLLAPGAQWKASESEANVYEIRDLASGELRWTATAVDLIFGSNSQLRSLAEVYASADAREKFVRDFVAAWVKVMDADRFDLA</sequence>
<gene>
    <name evidence="1" type="primary">katG</name>
    <name type="ordered locus">Noca_0875</name>
</gene>